<accession>Q64151</accession>
<keyword id="KW-1003">Cell membrane</keyword>
<keyword id="KW-0968">Cytoplasmic vesicle</keyword>
<keyword id="KW-0217">Developmental protein</keyword>
<keyword id="KW-0221">Differentiation</keyword>
<keyword id="KW-1015">Disulfide bond</keyword>
<keyword id="KW-0325">Glycoprotein</keyword>
<keyword id="KW-0393">Immunoglobulin domain</keyword>
<keyword id="KW-0472">Membrane</keyword>
<keyword id="KW-0524">Neurogenesis</keyword>
<keyword id="KW-0597">Phosphoprotein</keyword>
<keyword id="KW-0628">Postsynaptic cell membrane</keyword>
<keyword id="KW-1185">Reference proteome</keyword>
<keyword id="KW-0732">Signal</keyword>
<keyword id="KW-0770">Synapse</keyword>
<keyword id="KW-0812">Transmembrane</keyword>
<keyword id="KW-1133">Transmembrane helix</keyword>
<comment type="function">
    <text evidence="9 10 11 12">Cell surface receptor for PLXNB2 that plays an important role in cell-cell signaling. PLXNB2 binding promotes downstream activation of RHOA and phosphorylation of ERBB2 at 'Tyr-1248'. Required for normal brain development, axon guidance and cell migration. Probable signaling receptor which may play a role in myogenic differentiation through activation of the stress-activated MAPK cascade.</text>
</comment>
<comment type="subunit">
    <text evidence="6 7 8 11 12">Interacts (via the PDZ-binding motif) with GIPC (via the PDZ domain). Interacts with NCDN. Interacts (via the PDZ-binding motif) with DLG4. Interacts with PLXNB2.</text>
</comment>
<comment type="interaction">
    <interactant intactId="EBI-987075">
        <id>Q64151</id>
    </interactant>
    <interactant intactId="EBI-300855">
        <id>Q9Z0G0</id>
        <label>Gipc1</label>
    </interactant>
    <organismsDiffer>false</organismsDiffer>
    <experiments>8</experiments>
</comment>
<comment type="interaction">
    <interactant intactId="EBI-987075">
        <id>Q64151</id>
    </interactant>
    <interactant intactId="EBI-987119">
        <id>Q9Z2H7</id>
        <label>Gipc2</label>
    </interactant>
    <organismsDiffer>false</organismsDiffer>
    <experiments>3</experiments>
</comment>
<comment type="subcellular location">
    <subcellularLocation>
        <location evidence="7">Postsynaptic density membrane</location>
        <topology evidence="7">Single-pass type I membrane protein</topology>
    </subcellularLocation>
    <subcellularLocation>
        <location evidence="7">Cytoplasmic vesicle</location>
        <location evidence="7">Secretory vesicle</location>
        <location evidence="7">Synaptic vesicle membrane</location>
        <topology evidence="7">Single-pass type I membrane protein</topology>
    </subcellularLocation>
</comment>
<comment type="tissue specificity">
    <text evidence="7">Predominantly expressed in brain (at protein level).</text>
</comment>
<comment type="developmental stage">
    <text evidence="7">First detected at 14 dpc, levels increase by birth and remain strong in the adult brain (at protein level). Expressed widely in the nervous tissues during development.</text>
</comment>
<comment type="induction">
    <text evidence="9 10">Up-regulated in differentiating myoblasts and upon muscle regeneration (at protein level).</text>
</comment>
<comment type="disruption phenotype">
    <text evidence="12">Partial neonate lethality, due to defects in brain and neural tube development. In about one third of the embryos cranial neural folds fail to converge, leading to an open neural tube and exencephaly. Mice without exencephaly are viable and fertile.</text>
</comment>
<comment type="similarity">
    <text evidence="13">Belongs to the semaphorin family.</text>
</comment>
<sequence length="834" mass="92557">MAPHWAVWLLAAGLWGLGIGAEMWWNLVPRKTVSSGELVTVVRRFSQTGIQDFLTLTLTEHSGLLYVGAREALFAFSVEALELQGAISWEAPAEKKIECTQKGKSNQTECFNFIRFLQPYNSSHLYVCGTYAFQPKCTYINMLTFTLDRAEFEDGKGKCPYDPAKGHTGLLVDGELYSATLNNFLGTEPVILRYMGTHHSIKTEYLAFWLNEPHFVGSAFVPESVGSFTGDDDKIYFFFSERAVEYDCYSEQVVARVARVCKGDMGGARTLQKKWTTFLKARLVCSAPDWKVYFNQLKAVHTLRGASWHNTTFFGVFQARWGDMDLSAVCEYQLEQIQQVFEGPYKEYSEQAQKWARYTDPVPSPRPGSCINNWHRDNGYTSSLELPDNTLNFIKKHPLMEDQVKPRLGRPLLVKKNTNFTHVVADRVPGLDGATYTVLFIGTGDGWLLKAVSLGPWIHMVEELQVFDQEPVESLVLSQSKKVLFAGSRSQLVQLSLADCTKYRFCVDCVLARDPYCAWNVNTSRCVATTSGRSGSFLVQHVANLDTSKMCNQYGIKKVRSIPKNITVVSGTDLVLPCHLSSNLAHAHWTFGSQDLPAEQPGSFLYDTGLQALVVMAAQSRHSGPYRCYSEEQGTRLAAESYLVAVVAGSSVTLEARAPLENLGLVWLAVVALGAVCLVLLLLVLSLRRRLREELEKGAKASERTLVYPLELPKEPASPPFRPGPETDEKLWDPVGYYYSDGSLKIVPGHARCQPGGGPPSPPPGIPGQPLPSPTRLHLGGGRNSNANGYVRLQLGGEDRGGSGHPLPELADELRRKLQQRQPLPDSNPEESSV</sequence>
<proteinExistence type="evidence at protein level"/>
<dbReference type="EMBL" id="S79463">
    <property type="protein sequence ID" value="AAB35184.1"/>
    <property type="molecule type" value="mRNA"/>
</dbReference>
<dbReference type="CCDS" id="CCDS48240.1"/>
<dbReference type="PIR" id="S66498">
    <property type="entry name" value="S66498"/>
</dbReference>
<dbReference type="RefSeq" id="NP_001119519.1">
    <property type="nucleotide sequence ID" value="NM_001126047.4"/>
</dbReference>
<dbReference type="RefSeq" id="NP_001291258.1">
    <property type="nucleotide sequence ID" value="NM_001304329.2"/>
</dbReference>
<dbReference type="RefSeq" id="NP_001291259.1">
    <property type="nucleotide sequence ID" value="NM_001304330.2"/>
</dbReference>
<dbReference type="RefSeq" id="NP_001419545.1">
    <property type="nucleotide sequence ID" value="NM_001432616.1"/>
</dbReference>
<dbReference type="RefSeq" id="NP_001419546.1">
    <property type="nucleotide sequence ID" value="NM_001432617.1"/>
</dbReference>
<dbReference type="RefSeq" id="NP_001419547.1">
    <property type="nucleotide sequence ID" value="NM_001432618.1"/>
</dbReference>
<dbReference type="RefSeq" id="NP_001419548.1">
    <property type="nucleotide sequence ID" value="NM_001432619.1"/>
</dbReference>
<dbReference type="RefSeq" id="NP_001419549.1">
    <property type="nucleotide sequence ID" value="NM_001432620.1"/>
</dbReference>
<dbReference type="RefSeq" id="XP_006495868.1">
    <property type="nucleotide sequence ID" value="XM_006495805.2"/>
</dbReference>
<dbReference type="RefSeq" id="XP_006495870.1">
    <property type="nucleotide sequence ID" value="XM_006495807.1"/>
</dbReference>
<dbReference type="RefSeq" id="XP_006495871.1">
    <property type="nucleotide sequence ID" value="XM_006495808.3"/>
</dbReference>
<dbReference type="RefSeq" id="XP_006495872.1">
    <property type="nucleotide sequence ID" value="XM_006495809.3"/>
</dbReference>
<dbReference type="RefSeq" id="XP_006495873.1">
    <property type="nucleotide sequence ID" value="XM_006495810.3"/>
</dbReference>
<dbReference type="RefSeq" id="XP_030108198.1">
    <property type="nucleotide sequence ID" value="XM_030252338.1"/>
</dbReference>
<dbReference type="RefSeq" id="XP_036018810.1">
    <property type="nucleotide sequence ID" value="XM_036162917.1"/>
</dbReference>
<dbReference type="SMR" id="Q64151"/>
<dbReference type="BioGRID" id="203168">
    <property type="interactions" value="5"/>
</dbReference>
<dbReference type="FunCoup" id="Q64151">
    <property type="interactions" value="259"/>
</dbReference>
<dbReference type="IntAct" id="Q64151">
    <property type="interactions" value="2"/>
</dbReference>
<dbReference type="MINT" id="Q64151"/>
<dbReference type="STRING" id="10090.ENSMUSP00000142284"/>
<dbReference type="GlyCosmos" id="Q64151">
    <property type="glycosylation" value="6 sites, No reported glycans"/>
</dbReference>
<dbReference type="GlyGen" id="Q64151">
    <property type="glycosylation" value="6 sites, 4 N-linked glycans (4 sites)"/>
</dbReference>
<dbReference type="iPTMnet" id="Q64151"/>
<dbReference type="PhosphoSitePlus" id="Q64151"/>
<dbReference type="PaxDb" id="10090-ENSMUSP00000110643"/>
<dbReference type="PeptideAtlas" id="Q64151"/>
<dbReference type="ProteomicsDB" id="261152"/>
<dbReference type="Antibodypedia" id="2594">
    <property type="antibodies" value="178 antibodies from 30 providers"/>
</dbReference>
<dbReference type="Ensembl" id="ENSMUST00000114991.8">
    <property type="protein sequence ID" value="ENSMUSP00000110643.2"/>
    <property type="gene ID" value="ENSMUSG00000026121.14"/>
</dbReference>
<dbReference type="Ensembl" id="ENSMUST00000191642.6">
    <property type="protein sequence ID" value="ENSMUSP00000142284.2"/>
    <property type="gene ID" value="ENSMUSG00000026121.14"/>
</dbReference>
<dbReference type="Ensembl" id="ENSMUST00000191677.6">
    <property type="protein sequence ID" value="ENSMUSP00000141263.2"/>
    <property type="gene ID" value="ENSMUSG00000026121.14"/>
</dbReference>
<dbReference type="Ensembl" id="ENSMUST00000195620.6">
    <property type="protein sequence ID" value="ENSMUSP00000141527.2"/>
    <property type="gene ID" value="ENSMUSG00000026121.14"/>
</dbReference>
<dbReference type="GeneID" id="20353"/>
<dbReference type="KEGG" id="mmu:20353"/>
<dbReference type="UCSC" id="uc007aqq.4">
    <property type="organism name" value="mouse"/>
</dbReference>
<dbReference type="AGR" id="MGI:109252"/>
<dbReference type="CTD" id="54910"/>
<dbReference type="MGI" id="MGI:109252">
    <property type="gene designation" value="Sema4c"/>
</dbReference>
<dbReference type="VEuPathDB" id="HostDB:ENSMUSG00000026121"/>
<dbReference type="eggNOG" id="KOG3611">
    <property type="taxonomic scope" value="Eukaryota"/>
</dbReference>
<dbReference type="GeneTree" id="ENSGT00940000159885"/>
<dbReference type="HOGENOM" id="CLU_009051_4_2_1"/>
<dbReference type="InParanoid" id="Q64151"/>
<dbReference type="OMA" id="SAICEYQ"/>
<dbReference type="OrthoDB" id="9934005at2759"/>
<dbReference type="PhylomeDB" id="Q64151"/>
<dbReference type="TreeFam" id="TF316102"/>
<dbReference type="BioGRID-ORCS" id="20353">
    <property type="hits" value="0 hits in 62 CRISPR screens"/>
</dbReference>
<dbReference type="ChiTaRS" id="Sema4c">
    <property type="organism name" value="mouse"/>
</dbReference>
<dbReference type="PRO" id="PR:Q64151"/>
<dbReference type="Proteomes" id="UP000000589">
    <property type="component" value="Chromosome 1"/>
</dbReference>
<dbReference type="RNAct" id="Q64151">
    <property type="molecule type" value="protein"/>
</dbReference>
<dbReference type="Bgee" id="ENSMUSG00000026121">
    <property type="expression patterns" value="Expressed in ectoplacental cone and 198 other cell types or tissues"/>
</dbReference>
<dbReference type="ExpressionAtlas" id="Q64151">
    <property type="expression patterns" value="baseline and differential"/>
</dbReference>
<dbReference type="GO" id="GO:0098978">
    <property type="term" value="C:glutamatergic synapse"/>
    <property type="evidence" value="ECO:0000314"/>
    <property type="project" value="SynGO"/>
</dbReference>
<dbReference type="GO" id="GO:0014069">
    <property type="term" value="C:postsynaptic density"/>
    <property type="evidence" value="ECO:0000314"/>
    <property type="project" value="UniProtKB"/>
</dbReference>
<dbReference type="GO" id="GO:0098839">
    <property type="term" value="C:postsynaptic density membrane"/>
    <property type="evidence" value="ECO:0000314"/>
    <property type="project" value="SynGO"/>
</dbReference>
<dbReference type="GO" id="GO:0030672">
    <property type="term" value="C:synaptic vesicle membrane"/>
    <property type="evidence" value="ECO:0000314"/>
    <property type="project" value="UniProtKB"/>
</dbReference>
<dbReference type="GO" id="GO:0030215">
    <property type="term" value="F:semaphorin receptor binding"/>
    <property type="evidence" value="ECO:0007669"/>
    <property type="project" value="InterPro"/>
</dbReference>
<dbReference type="GO" id="GO:0021535">
    <property type="term" value="P:cell migration in hindbrain"/>
    <property type="evidence" value="ECO:0000315"/>
    <property type="project" value="UniProtKB"/>
</dbReference>
<dbReference type="GO" id="GO:0021549">
    <property type="term" value="P:cerebellum development"/>
    <property type="evidence" value="ECO:0000315"/>
    <property type="project" value="UniProtKB"/>
</dbReference>
<dbReference type="GO" id="GO:0042692">
    <property type="term" value="P:muscle cell differentiation"/>
    <property type="evidence" value="ECO:0000315"/>
    <property type="project" value="UniProtKB"/>
</dbReference>
<dbReference type="GO" id="GO:0001843">
    <property type="term" value="P:neural tube closure"/>
    <property type="evidence" value="ECO:0000315"/>
    <property type="project" value="UniProtKB"/>
</dbReference>
<dbReference type="GO" id="GO:0032874">
    <property type="term" value="P:positive regulation of stress-activated MAPK cascade"/>
    <property type="evidence" value="ECO:0000250"/>
    <property type="project" value="UniProtKB"/>
</dbReference>
<dbReference type="GO" id="GO:0150052">
    <property type="term" value="P:regulation of postsynapse assembly"/>
    <property type="evidence" value="ECO:0000314"/>
    <property type="project" value="SynGO"/>
</dbReference>
<dbReference type="GO" id="GO:0071526">
    <property type="term" value="P:semaphorin-plexin signaling pathway"/>
    <property type="evidence" value="ECO:0000315"/>
    <property type="project" value="UniProtKB"/>
</dbReference>
<dbReference type="CDD" id="cd11258">
    <property type="entry name" value="Sema_4C"/>
    <property type="match status" value="1"/>
</dbReference>
<dbReference type="FunFam" id="2.130.10.10:FF:000033">
    <property type="entry name" value="Semaphorin 4B"/>
    <property type="match status" value="1"/>
</dbReference>
<dbReference type="FunFam" id="2.60.40.10:FF:001189">
    <property type="entry name" value="Semaphorin 4C"/>
    <property type="match status" value="1"/>
</dbReference>
<dbReference type="FunFam" id="3.30.1680.10:FF:000021">
    <property type="entry name" value="Semaphorin 4C"/>
    <property type="match status" value="1"/>
</dbReference>
<dbReference type="Gene3D" id="2.60.40.10">
    <property type="entry name" value="Immunoglobulins"/>
    <property type="match status" value="1"/>
</dbReference>
<dbReference type="Gene3D" id="3.30.1680.10">
    <property type="entry name" value="ligand-binding face of the semaphorins, domain 2"/>
    <property type="match status" value="1"/>
</dbReference>
<dbReference type="Gene3D" id="2.130.10.10">
    <property type="entry name" value="YVTN repeat-like/Quinoprotein amine dehydrogenase"/>
    <property type="match status" value="1"/>
</dbReference>
<dbReference type="InterPro" id="IPR007110">
    <property type="entry name" value="Ig-like_dom"/>
</dbReference>
<dbReference type="InterPro" id="IPR036179">
    <property type="entry name" value="Ig-like_dom_sf"/>
</dbReference>
<dbReference type="InterPro" id="IPR013783">
    <property type="entry name" value="Ig-like_fold"/>
</dbReference>
<dbReference type="InterPro" id="IPR003599">
    <property type="entry name" value="Ig_sub"/>
</dbReference>
<dbReference type="InterPro" id="IPR002165">
    <property type="entry name" value="Plexin_repeat"/>
</dbReference>
<dbReference type="InterPro" id="IPR016201">
    <property type="entry name" value="PSI"/>
</dbReference>
<dbReference type="InterPro" id="IPR001627">
    <property type="entry name" value="Semap_dom"/>
</dbReference>
<dbReference type="InterPro" id="IPR036352">
    <property type="entry name" value="Semap_dom_sf"/>
</dbReference>
<dbReference type="InterPro" id="IPR027231">
    <property type="entry name" value="Semaphorin"/>
</dbReference>
<dbReference type="InterPro" id="IPR015943">
    <property type="entry name" value="WD40/YVTN_repeat-like_dom_sf"/>
</dbReference>
<dbReference type="PANTHER" id="PTHR11036">
    <property type="entry name" value="SEMAPHORIN"/>
    <property type="match status" value="1"/>
</dbReference>
<dbReference type="PANTHER" id="PTHR11036:SF16">
    <property type="entry name" value="SEMAPHORIN-4C"/>
    <property type="match status" value="1"/>
</dbReference>
<dbReference type="Pfam" id="PF01437">
    <property type="entry name" value="PSI"/>
    <property type="match status" value="1"/>
</dbReference>
<dbReference type="Pfam" id="PF01403">
    <property type="entry name" value="Sema"/>
    <property type="match status" value="1"/>
</dbReference>
<dbReference type="SMART" id="SM00409">
    <property type="entry name" value="IG"/>
    <property type="match status" value="1"/>
</dbReference>
<dbReference type="SMART" id="SM00423">
    <property type="entry name" value="PSI"/>
    <property type="match status" value="1"/>
</dbReference>
<dbReference type="SMART" id="SM00630">
    <property type="entry name" value="Sema"/>
    <property type="match status" value="1"/>
</dbReference>
<dbReference type="SUPFAM" id="SSF48726">
    <property type="entry name" value="Immunoglobulin"/>
    <property type="match status" value="1"/>
</dbReference>
<dbReference type="SUPFAM" id="SSF103575">
    <property type="entry name" value="Plexin repeat"/>
    <property type="match status" value="1"/>
</dbReference>
<dbReference type="SUPFAM" id="SSF101912">
    <property type="entry name" value="Sema domain"/>
    <property type="match status" value="1"/>
</dbReference>
<dbReference type="PROSITE" id="PS50835">
    <property type="entry name" value="IG_LIKE"/>
    <property type="match status" value="1"/>
</dbReference>
<dbReference type="PROSITE" id="PS51004">
    <property type="entry name" value="SEMA"/>
    <property type="match status" value="1"/>
</dbReference>
<protein>
    <recommendedName>
        <fullName>Semaphorin-4C</fullName>
    </recommendedName>
    <alternativeName>
        <fullName>M-Sema F</fullName>
    </alternativeName>
    <alternativeName>
        <fullName>Semaphorin-C-like 1</fullName>
        <shortName>Sema I</shortName>
        <shortName>Semaphorin I</shortName>
    </alternativeName>
</protein>
<name>SEM4C_MOUSE</name>
<reference key="1">
    <citation type="journal article" date="1995" name="FEBS Lett.">
        <title>Identification of a member of mouse semaphorin family.</title>
        <authorList>
            <person name="Inagaki S."/>
            <person name="Furuyama T."/>
            <person name="Iwahashi Y."/>
        </authorList>
    </citation>
    <scope>NUCLEOTIDE SEQUENCE [MRNA]</scope>
    <source>
        <tissue>Neonatal brain</tissue>
    </source>
</reference>
<reference key="2">
    <citation type="journal article" date="1999" name="J. Biol. Chem.">
        <title>A PDZ protein regulates the distribution of the transmembrane semaphorin, M-SemF.</title>
        <authorList>
            <person name="Wang L.-H."/>
            <person name="Kalb R.G."/>
            <person name="Strittmatter S.M."/>
        </authorList>
    </citation>
    <scope>INTERACTION WITH GIPC</scope>
</reference>
<reference key="3">
    <citation type="journal article" date="2001" name="Biochem. Biophys. Res. Commun.">
        <title>Semaphorin 4C, a transmembrane semaphorin, associates with a neurite-outgrowth-related protein, SFAP75.</title>
        <authorList>
            <person name="Ohoka Y."/>
            <person name="Hirotani M."/>
            <person name="Sugimoto H."/>
            <person name="Fujioka S."/>
            <person name="Furuyama T."/>
            <person name="Inagaki S."/>
        </authorList>
    </citation>
    <scope>INTERACTION WITH NCDN</scope>
</reference>
<reference key="4">
    <citation type="journal article" date="2001" name="J. Biol. Chem.">
        <title>Sema4c, a transmembrane semaphorin, interacts with a post-synaptic density protein, PSD-95.</title>
        <authorList>
            <person name="Inagaki S."/>
            <person name="Ohoka Y."/>
            <person name="Sugimoto H."/>
            <person name="Fujioka S."/>
            <person name="Amazaki M."/>
            <person name="Kurinami H."/>
            <person name="Miyazaki N."/>
            <person name="Tohyama M."/>
            <person name="Furuyama T."/>
        </authorList>
    </citation>
    <scope>SUBCELLULAR LOCATION</scope>
    <scope>INTERACTION WITH DLG4</scope>
    <scope>TISSUE SPECIFICITY</scope>
    <scope>DEVELOPMENTAL STAGE</scope>
    <scope>MUTAGENESIS OF SER-832; SER-833 AND VAL-834</scope>
</reference>
<reference key="5">
    <citation type="journal article" date="2005" name="FEBS Lett.">
        <title>Requirement of the transmembrane semaphorin Sema4C for myogenic differentiation.</title>
        <authorList>
            <person name="Ko J.-A."/>
            <person name="Gondo T."/>
            <person name="Inagaki S."/>
            <person name="Inui M."/>
        </authorList>
    </citation>
    <scope>FUNCTION</scope>
    <scope>MUTAGENESIS OF SER-832 AND VAL-834</scope>
    <scope>INDUCTION</scope>
</reference>
<reference key="6">
    <citation type="journal article" date="2007" name="Eur. J. Cell Biol.">
        <title>Sema4C participates in myogenic differentiation in vivo and in vitro through the p38 MAPK pathway.</title>
        <authorList>
            <person name="Wu H."/>
            <person name="Wang X."/>
            <person name="Liu S."/>
            <person name="Wu Y."/>
            <person name="Zhao T."/>
            <person name="Chen X."/>
            <person name="Zhu L."/>
            <person name="Wu Y."/>
            <person name="Ding X."/>
            <person name="Peng X."/>
            <person name="Yuan J."/>
            <person name="Wang X."/>
            <person name="Fan W."/>
            <person name="Fan M."/>
        </authorList>
    </citation>
    <scope>FUNCTION</scope>
    <scope>INDUCTION</scope>
</reference>
<reference key="7">
    <citation type="journal article" date="2007" name="J. Neurosci.">
        <title>Plexin-B2, but not Plexin-B1, critically modulates neuronal migration and patterning of the developing nervous system in vivo.</title>
        <authorList>
            <person name="Deng S."/>
            <person name="Hirschberg A."/>
            <person name="Worzfeld T."/>
            <person name="Penachioni J.Y."/>
            <person name="Korostylev A."/>
            <person name="Swiercz J.M."/>
            <person name="Vodrazka P."/>
            <person name="Mauti O."/>
            <person name="Stoeckli E.T."/>
            <person name="Tamagnone L."/>
            <person name="Offermanns S."/>
            <person name="Kuner R."/>
        </authorList>
    </citation>
    <scope>FUNCTION</scope>
    <scope>INTERACTION WITH PLXNB2</scope>
</reference>
<reference key="8">
    <citation type="journal article" date="2010" name="Cell">
        <title>A tissue-specific atlas of mouse protein phosphorylation and expression.</title>
        <authorList>
            <person name="Huttlin E.L."/>
            <person name="Jedrychowski M.P."/>
            <person name="Elias J.E."/>
            <person name="Goswami T."/>
            <person name="Rad R."/>
            <person name="Beausoleil S.A."/>
            <person name="Villen J."/>
            <person name="Haas W."/>
            <person name="Sowa M.E."/>
            <person name="Gygi S.P."/>
        </authorList>
    </citation>
    <scope>IDENTIFICATION BY MASS SPECTROMETRY [LARGE SCALE ANALYSIS]</scope>
    <source>
        <tissue>Brain</tissue>
    </source>
</reference>
<reference key="9">
    <citation type="journal article" date="2011" name="Mol. Cell. Neurosci.">
        <title>Semaphorin 4C and 4G are ligands of Plexin-B2 required in cerebellar development.</title>
        <authorList>
            <person name="Maier V."/>
            <person name="Jolicoeur C."/>
            <person name="Rayburn H."/>
            <person name="Takegahara N."/>
            <person name="Kumanogoh A."/>
            <person name="Kikutani H."/>
            <person name="Tessier-Lavigne M."/>
            <person name="Wurst W."/>
            <person name="Friedel R.H."/>
        </authorList>
    </citation>
    <scope>FUNCTION</scope>
    <scope>INTERACTION WITH PLXNB2</scope>
    <scope>DISRUPTION PHENOTYPE</scope>
</reference>
<gene>
    <name type="primary">Sema4c</name>
    <name type="synonym">S4c</name>
    <name type="synonym">Semacl1</name>
    <name type="synonym">Semai</name>
</gene>
<organism>
    <name type="scientific">Mus musculus</name>
    <name type="common">Mouse</name>
    <dbReference type="NCBI Taxonomy" id="10090"/>
    <lineage>
        <taxon>Eukaryota</taxon>
        <taxon>Metazoa</taxon>
        <taxon>Chordata</taxon>
        <taxon>Craniata</taxon>
        <taxon>Vertebrata</taxon>
        <taxon>Euteleostomi</taxon>
        <taxon>Mammalia</taxon>
        <taxon>Eutheria</taxon>
        <taxon>Euarchontoglires</taxon>
        <taxon>Glires</taxon>
        <taxon>Rodentia</taxon>
        <taxon>Myomorpha</taxon>
        <taxon>Muroidea</taxon>
        <taxon>Muridae</taxon>
        <taxon>Murinae</taxon>
        <taxon>Mus</taxon>
        <taxon>Mus</taxon>
    </lineage>
</organism>
<feature type="signal peptide" evidence="3">
    <location>
        <begin position="1"/>
        <end position="20"/>
    </location>
</feature>
<feature type="chain" id="PRO_0000032326" description="Semaphorin-4C">
    <location>
        <begin position="21"/>
        <end position="834"/>
    </location>
</feature>
<feature type="topological domain" description="Extracellular" evidence="3">
    <location>
        <begin position="21"/>
        <end position="664"/>
    </location>
</feature>
<feature type="transmembrane region" description="Helical" evidence="3">
    <location>
        <begin position="665"/>
        <end position="685"/>
    </location>
</feature>
<feature type="topological domain" description="Cytoplasmic" evidence="3">
    <location>
        <begin position="686"/>
        <end position="834"/>
    </location>
</feature>
<feature type="domain" description="Sema" evidence="4">
    <location>
        <begin position="30"/>
        <end position="497"/>
    </location>
</feature>
<feature type="domain" description="PSI">
    <location>
        <begin position="499"/>
        <end position="552"/>
    </location>
</feature>
<feature type="domain" description="Ig-like C2-type">
    <location>
        <begin position="557"/>
        <end position="645"/>
    </location>
</feature>
<feature type="region of interest" description="Dominant negative effect on myogenic differentiation">
    <location>
        <begin position="46"/>
        <end position="489"/>
    </location>
</feature>
<feature type="region of interest" description="Disordered" evidence="5">
    <location>
        <begin position="749"/>
        <end position="834"/>
    </location>
</feature>
<feature type="short sequence motif" description="PDZ-binding">
    <location>
        <begin position="831"/>
        <end position="834"/>
    </location>
</feature>
<feature type="compositionally biased region" description="Pro residues" evidence="5">
    <location>
        <begin position="757"/>
        <end position="773"/>
    </location>
</feature>
<feature type="modified residue" description="Phosphoserine" evidence="2">
    <location>
        <position position="743"/>
    </location>
</feature>
<feature type="glycosylation site" description="N-linked (GlcNAc...) asparagine" evidence="3">
    <location>
        <position position="106"/>
    </location>
</feature>
<feature type="glycosylation site" description="N-linked (GlcNAc...) asparagine" evidence="3">
    <location>
        <position position="121"/>
    </location>
</feature>
<feature type="glycosylation site" description="N-linked (GlcNAc...) asparagine" evidence="3">
    <location>
        <position position="310"/>
    </location>
</feature>
<feature type="glycosylation site" description="N-linked (GlcNAc...) asparagine" evidence="3">
    <location>
        <position position="419"/>
    </location>
</feature>
<feature type="glycosylation site" description="N-linked (GlcNAc...) asparagine" evidence="3">
    <location>
        <position position="522"/>
    </location>
</feature>
<feature type="glycosylation site" description="N-linked (GlcNAc...) asparagine" evidence="3">
    <location>
        <position position="565"/>
    </location>
</feature>
<feature type="disulfide bond" evidence="1">
    <location>
        <begin position="99"/>
        <end position="110"/>
    </location>
</feature>
<feature type="disulfide bond" evidence="1">
    <location>
        <begin position="128"/>
        <end position="137"/>
    </location>
</feature>
<feature type="disulfide bond" evidence="1">
    <location>
        <begin position="261"/>
        <end position="370"/>
    </location>
</feature>
<feature type="disulfide bond" evidence="1">
    <location>
        <begin position="285"/>
        <end position="330"/>
    </location>
</feature>
<feature type="disulfide bond" evidence="1">
    <location>
        <begin position="500"/>
        <end position="517"/>
    </location>
</feature>
<feature type="disulfide bond" evidence="1">
    <location>
        <begin position="509"/>
        <end position="526"/>
    </location>
</feature>
<feature type="disulfide bond" evidence="1">
    <location>
        <begin position="578"/>
        <end position="628"/>
    </location>
</feature>
<feature type="mutagenesis site" description="Loss of the effect on myogenic differentiation; when associated with A-834. Loss of interaction with DLG4; when associated with A-833 and A-834." evidence="7 9">
    <original>S</original>
    <variation>A</variation>
    <location>
        <position position="832"/>
    </location>
</feature>
<feature type="mutagenesis site" description="Loss of interaction with DLG4; when associated with A-832 and A-834." evidence="7">
    <original>S</original>
    <variation>A</variation>
    <location>
        <position position="833"/>
    </location>
</feature>
<feature type="mutagenesis site" description="Loss of the effect on myogenic differentiation; when associated with A-832. Loss of interaction with DLG4; when associated with A-832 and A-833." evidence="7 9">
    <original>V</original>
    <variation>A</variation>
    <location>
        <position position="834"/>
    </location>
</feature>
<evidence type="ECO:0000250" key="1"/>
<evidence type="ECO:0000250" key="2">
    <source>
        <dbReference type="UniProtKB" id="Q9C0C4"/>
    </source>
</evidence>
<evidence type="ECO:0000255" key="3"/>
<evidence type="ECO:0000255" key="4">
    <source>
        <dbReference type="PROSITE-ProRule" id="PRU00352"/>
    </source>
</evidence>
<evidence type="ECO:0000256" key="5">
    <source>
        <dbReference type="SAM" id="MobiDB-lite"/>
    </source>
</evidence>
<evidence type="ECO:0000269" key="6">
    <source>
    </source>
</evidence>
<evidence type="ECO:0000269" key="7">
    <source>
    </source>
</evidence>
<evidence type="ECO:0000269" key="8">
    <source>
    </source>
</evidence>
<evidence type="ECO:0000269" key="9">
    <source>
    </source>
</evidence>
<evidence type="ECO:0000269" key="10">
    <source>
    </source>
</evidence>
<evidence type="ECO:0000269" key="11">
    <source>
    </source>
</evidence>
<evidence type="ECO:0000269" key="12">
    <source>
    </source>
</evidence>
<evidence type="ECO:0000305" key="13"/>